<evidence type="ECO:0000255" key="1">
    <source>
        <dbReference type="HAMAP-Rule" id="MF_00700"/>
    </source>
</evidence>
<organism>
    <name type="scientific">Methanothermobacter thermautotrophicus (strain ATCC 29096 / DSM 1053 / JCM 10044 / NBRC 100330 / Delta H)</name>
    <name type="common">Methanobacterium thermoautotrophicum</name>
    <dbReference type="NCBI Taxonomy" id="187420"/>
    <lineage>
        <taxon>Archaea</taxon>
        <taxon>Methanobacteriati</taxon>
        <taxon>Methanobacteriota</taxon>
        <taxon>Methanomada group</taxon>
        <taxon>Methanobacteria</taxon>
        <taxon>Methanobacteriales</taxon>
        <taxon>Methanobacteriaceae</taxon>
        <taxon>Methanothermobacter</taxon>
    </lineage>
</organism>
<keyword id="KW-0235">DNA replication</keyword>
<keyword id="KW-0240">DNA-directed RNA polymerase</keyword>
<keyword id="KW-0460">Magnesium</keyword>
<keyword id="KW-0464">Manganese</keyword>
<keyword id="KW-0479">Metal-binding</keyword>
<keyword id="KW-0548">Nucleotidyltransferase</keyword>
<keyword id="KW-0639">Primosome</keyword>
<keyword id="KW-1185">Reference proteome</keyword>
<keyword id="KW-0804">Transcription</keyword>
<keyword id="KW-0808">Transferase</keyword>
<name>PRIS_METTH</name>
<protein>
    <recommendedName>
        <fullName evidence="1">DNA primase small subunit PriS</fullName>
        <ecNumber evidence="1">2.7.7.-</ecNumber>
    </recommendedName>
</protein>
<sequence length="323" mass="37892">MMPMFEPATPLERKRYYREEWNVRDLPDFIADNLHMREFGFDHNGRGPSDRYRVFRDERSLARFMRVRYPFAAYSSVAFYREPWKRKGWQRSELIFDVDAKDLPVRSCECDGVCPTCLDEARELVLMMVDTLKGDLGLGDIHVIYSGRGYHVRVLDPEVMELGSEVRAEILRYTAGAREPRRKFTDGVSSYEMEHFSIPLGYHRVFTERARHVLLHLRGDEDIEDVTARTVKTAVRNRNLILEDRWGEFRSVIGPRVYPRLVKGISKINMRMLDAKVTIDLKRILRLPTSLHSKVSMICMEVKNPETFDPLKSAVPRFVDERE</sequence>
<proteinExistence type="inferred from homology"/>
<feature type="chain" id="PRO_0000046746" description="DNA primase small subunit PriS">
    <location>
        <begin position="1"/>
        <end position="323"/>
    </location>
</feature>
<feature type="active site" evidence="1">
    <location>
        <position position="97"/>
    </location>
</feature>
<feature type="active site" evidence="1">
    <location>
        <position position="99"/>
    </location>
</feature>
<feature type="active site" evidence="1">
    <location>
        <position position="274"/>
    </location>
</feature>
<reference key="1">
    <citation type="journal article" date="1997" name="J. Bacteriol.">
        <title>Complete genome sequence of Methanobacterium thermoautotrophicum deltaH: functional analysis and comparative genomics.</title>
        <authorList>
            <person name="Smith D.R."/>
            <person name="Doucette-Stamm L.A."/>
            <person name="Deloughery C."/>
            <person name="Lee H.-M."/>
            <person name="Dubois J."/>
            <person name="Aldredge T."/>
            <person name="Bashirzadeh R."/>
            <person name="Blakely D."/>
            <person name="Cook R."/>
            <person name="Gilbert K."/>
            <person name="Harrison D."/>
            <person name="Hoang L."/>
            <person name="Keagle P."/>
            <person name="Lumm W."/>
            <person name="Pothier B."/>
            <person name="Qiu D."/>
            <person name="Spadafora R."/>
            <person name="Vicare R."/>
            <person name="Wang Y."/>
            <person name="Wierzbowski J."/>
            <person name="Gibson R."/>
            <person name="Jiwani N."/>
            <person name="Caruso A."/>
            <person name="Bush D."/>
            <person name="Safer H."/>
            <person name="Patwell D."/>
            <person name="Prabhakar S."/>
            <person name="McDougall S."/>
            <person name="Shimer G."/>
            <person name="Goyal A."/>
            <person name="Pietrovski S."/>
            <person name="Church G.M."/>
            <person name="Daniels C.J."/>
            <person name="Mao J.-I."/>
            <person name="Rice P."/>
            <person name="Noelling J."/>
            <person name="Reeve J.N."/>
        </authorList>
    </citation>
    <scope>NUCLEOTIDE SEQUENCE [LARGE SCALE GENOMIC DNA]</scope>
    <source>
        <strain>ATCC 29096 / DSM 1053 / JCM 10044 / NBRC 100330 / Delta H</strain>
    </source>
</reference>
<accession>O26685</accession>
<comment type="function">
    <text evidence="1">Catalytic subunit of DNA primase, an RNA polymerase that catalyzes the synthesis of short RNA molecules used as primers for DNA polymerase during DNA replication. The small subunit contains the primase catalytic core and has DNA synthesis activity on its own. Binding to the large subunit stabilizes and modulates the activity, increasing the rate of DNA synthesis while decreasing the length of the DNA fragments, and conferring RNA synthesis capability. The DNA polymerase activity may enable DNA primase to also catalyze primer extension after primer synthesis. May also play a role in DNA repair.</text>
</comment>
<comment type="cofactor">
    <cofactor evidence="1">
        <name>Mg(2+)</name>
        <dbReference type="ChEBI" id="CHEBI:18420"/>
    </cofactor>
    <cofactor evidence="1">
        <name>Mn(2+)</name>
        <dbReference type="ChEBI" id="CHEBI:29035"/>
    </cofactor>
</comment>
<comment type="subunit">
    <text evidence="1">Heterodimer of a small subunit (PriS) and a large subunit (PriL).</text>
</comment>
<comment type="similarity">
    <text evidence="1">Belongs to the eukaryotic-type primase small subunit family.</text>
</comment>
<gene>
    <name evidence="1" type="primary">priS</name>
    <name type="synonym">priA</name>
    <name type="ordered locus">MTH_585</name>
</gene>
<dbReference type="EC" id="2.7.7.-" evidence="1"/>
<dbReference type="EMBL" id="AE000666">
    <property type="protein sequence ID" value="AAB85091.1"/>
    <property type="molecule type" value="Genomic_DNA"/>
</dbReference>
<dbReference type="PIR" id="E69177">
    <property type="entry name" value="E69177"/>
</dbReference>
<dbReference type="SMR" id="O26685"/>
<dbReference type="FunCoup" id="O26685">
    <property type="interactions" value="11"/>
</dbReference>
<dbReference type="STRING" id="187420.MTH_585"/>
<dbReference type="PaxDb" id="187420-MTH_585"/>
<dbReference type="EnsemblBacteria" id="AAB85091">
    <property type="protein sequence ID" value="AAB85091"/>
    <property type="gene ID" value="MTH_585"/>
</dbReference>
<dbReference type="KEGG" id="mth:MTH_585"/>
<dbReference type="PATRIC" id="fig|187420.15.peg.564"/>
<dbReference type="HOGENOM" id="CLU_056123_1_0_2"/>
<dbReference type="InParanoid" id="O26685"/>
<dbReference type="Proteomes" id="UP000005223">
    <property type="component" value="Chromosome"/>
</dbReference>
<dbReference type="GO" id="GO:0000428">
    <property type="term" value="C:DNA-directed RNA polymerase complex"/>
    <property type="evidence" value="ECO:0007669"/>
    <property type="project" value="UniProtKB-KW"/>
</dbReference>
<dbReference type="GO" id="GO:1990077">
    <property type="term" value="C:primosome complex"/>
    <property type="evidence" value="ECO:0007669"/>
    <property type="project" value="UniProtKB-KW"/>
</dbReference>
<dbReference type="GO" id="GO:0003899">
    <property type="term" value="F:DNA-directed RNA polymerase activity"/>
    <property type="evidence" value="ECO:0007669"/>
    <property type="project" value="InterPro"/>
</dbReference>
<dbReference type="GO" id="GO:0046872">
    <property type="term" value="F:metal ion binding"/>
    <property type="evidence" value="ECO:0007669"/>
    <property type="project" value="UniProtKB-KW"/>
</dbReference>
<dbReference type="GO" id="GO:0006269">
    <property type="term" value="P:DNA replication, synthesis of primer"/>
    <property type="evidence" value="ECO:0007669"/>
    <property type="project" value="UniProtKB-UniRule"/>
</dbReference>
<dbReference type="CDD" id="cd04860">
    <property type="entry name" value="AE_Prim_S"/>
    <property type="match status" value="1"/>
</dbReference>
<dbReference type="Gene3D" id="1.10.8.160">
    <property type="entry name" value="DNA primase S, domain 2"/>
    <property type="match status" value="1"/>
</dbReference>
<dbReference type="Gene3D" id="3.90.920.10">
    <property type="entry name" value="DNA primase, PRIM domain"/>
    <property type="match status" value="1"/>
</dbReference>
<dbReference type="HAMAP" id="MF_00700">
    <property type="entry name" value="DNA_primase_sml_arc"/>
    <property type="match status" value="1"/>
</dbReference>
<dbReference type="InterPro" id="IPR002755">
    <property type="entry name" value="DNA_primase_S"/>
</dbReference>
<dbReference type="InterPro" id="IPR014052">
    <property type="entry name" value="DNA_primase_ssu_euk/arc"/>
</dbReference>
<dbReference type="InterPro" id="IPR023639">
    <property type="entry name" value="DNA_primase_ssu_PriS"/>
</dbReference>
<dbReference type="NCBIfam" id="TIGR00335">
    <property type="entry name" value="primase_sml"/>
    <property type="match status" value="1"/>
</dbReference>
<dbReference type="PANTHER" id="PTHR10536">
    <property type="entry name" value="DNA PRIMASE SMALL SUBUNIT"/>
    <property type="match status" value="1"/>
</dbReference>
<dbReference type="Pfam" id="PF01896">
    <property type="entry name" value="DNA_primase_S"/>
    <property type="match status" value="1"/>
</dbReference>
<dbReference type="SUPFAM" id="SSF56747">
    <property type="entry name" value="Prim-pol domain"/>
    <property type="match status" value="1"/>
</dbReference>